<accession>Q79G84</accession>
<accession>Q7TT93</accession>
<evidence type="ECO:0000250" key="1"/>
<evidence type="ECO:0000255" key="2">
    <source>
        <dbReference type="HAMAP-Rule" id="MF_00118"/>
    </source>
</evidence>
<dbReference type="EC" id="3.6.5.3" evidence="2"/>
<dbReference type="EMBL" id="BX640437">
    <property type="protein sequence ID" value="CAE30509.1"/>
    <property type="molecule type" value="Genomic_DNA"/>
</dbReference>
<dbReference type="EMBL" id="BX640437">
    <property type="protein sequence ID" value="CAE30529.1"/>
    <property type="molecule type" value="Genomic_DNA"/>
</dbReference>
<dbReference type="SMR" id="Q79G84"/>
<dbReference type="KEGG" id="bbr:BB0007"/>
<dbReference type="KEGG" id="bbr:BB0027"/>
<dbReference type="eggNOG" id="COG0050">
    <property type="taxonomic scope" value="Bacteria"/>
</dbReference>
<dbReference type="HOGENOM" id="CLU_007265_0_0_4"/>
<dbReference type="Proteomes" id="UP000001027">
    <property type="component" value="Chromosome"/>
</dbReference>
<dbReference type="GO" id="GO:0005829">
    <property type="term" value="C:cytosol"/>
    <property type="evidence" value="ECO:0007669"/>
    <property type="project" value="TreeGrafter"/>
</dbReference>
<dbReference type="GO" id="GO:0005525">
    <property type="term" value="F:GTP binding"/>
    <property type="evidence" value="ECO:0007669"/>
    <property type="project" value="UniProtKB-UniRule"/>
</dbReference>
<dbReference type="GO" id="GO:0003924">
    <property type="term" value="F:GTPase activity"/>
    <property type="evidence" value="ECO:0007669"/>
    <property type="project" value="InterPro"/>
</dbReference>
<dbReference type="GO" id="GO:0097216">
    <property type="term" value="F:guanosine tetraphosphate binding"/>
    <property type="evidence" value="ECO:0007669"/>
    <property type="project" value="UniProtKB-ARBA"/>
</dbReference>
<dbReference type="GO" id="GO:0003746">
    <property type="term" value="F:translation elongation factor activity"/>
    <property type="evidence" value="ECO:0007669"/>
    <property type="project" value="UniProtKB-UniRule"/>
</dbReference>
<dbReference type="CDD" id="cd01884">
    <property type="entry name" value="EF_Tu"/>
    <property type="match status" value="1"/>
</dbReference>
<dbReference type="CDD" id="cd03697">
    <property type="entry name" value="EFTU_II"/>
    <property type="match status" value="1"/>
</dbReference>
<dbReference type="CDD" id="cd03707">
    <property type="entry name" value="EFTU_III"/>
    <property type="match status" value="1"/>
</dbReference>
<dbReference type="FunFam" id="2.40.30.10:FF:000001">
    <property type="entry name" value="Elongation factor Tu"/>
    <property type="match status" value="1"/>
</dbReference>
<dbReference type="FunFam" id="3.40.50.300:FF:000003">
    <property type="entry name" value="Elongation factor Tu"/>
    <property type="match status" value="1"/>
</dbReference>
<dbReference type="Gene3D" id="3.40.50.300">
    <property type="entry name" value="P-loop containing nucleotide triphosphate hydrolases"/>
    <property type="match status" value="1"/>
</dbReference>
<dbReference type="Gene3D" id="2.40.30.10">
    <property type="entry name" value="Translation factors"/>
    <property type="match status" value="2"/>
</dbReference>
<dbReference type="HAMAP" id="MF_00118_B">
    <property type="entry name" value="EF_Tu_B"/>
    <property type="match status" value="1"/>
</dbReference>
<dbReference type="InterPro" id="IPR041709">
    <property type="entry name" value="EF-Tu_GTP-bd"/>
</dbReference>
<dbReference type="InterPro" id="IPR050055">
    <property type="entry name" value="EF-Tu_GTPase"/>
</dbReference>
<dbReference type="InterPro" id="IPR004161">
    <property type="entry name" value="EFTu-like_2"/>
</dbReference>
<dbReference type="InterPro" id="IPR033720">
    <property type="entry name" value="EFTU_2"/>
</dbReference>
<dbReference type="InterPro" id="IPR031157">
    <property type="entry name" value="G_TR_CS"/>
</dbReference>
<dbReference type="InterPro" id="IPR027417">
    <property type="entry name" value="P-loop_NTPase"/>
</dbReference>
<dbReference type="InterPro" id="IPR005225">
    <property type="entry name" value="Small_GTP-bd"/>
</dbReference>
<dbReference type="InterPro" id="IPR000795">
    <property type="entry name" value="T_Tr_GTP-bd_dom"/>
</dbReference>
<dbReference type="InterPro" id="IPR009000">
    <property type="entry name" value="Transl_B-barrel_sf"/>
</dbReference>
<dbReference type="InterPro" id="IPR009001">
    <property type="entry name" value="Transl_elong_EF1A/Init_IF2_C"/>
</dbReference>
<dbReference type="InterPro" id="IPR004541">
    <property type="entry name" value="Transl_elong_EFTu/EF1A_bac/org"/>
</dbReference>
<dbReference type="InterPro" id="IPR004160">
    <property type="entry name" value="Transl_elong_EFTu/EF1A_C"/>
</dbReference>
<dbReference type="NCBIfam" id="TIGR00485">
    <property type="entry name" value="EF-Tu"/>
    <property type="match status" value="1"/>
</dbReference>
<dbReference type="NCBIfam" id="NF000766">
    <property type="entry name" value="PRK00049.1"/>
    <property type="match status" value="1"/>
</dbReference>
<dbReference type="NCBIfam" id="NF009372">
    <property type="entry name" value="PRK12735.1"/>
    <property type="match status" value="1"/>
</dbReference>
<dbReference type="NCBIfam" id="NF009373">
    <property type="entry name" value="PRK12736.1"/>
    <property type="match status" value="1"/>
</dbReference>
<dbReference type="NCBIfam" id="TIGR00231">
    <property type="entry name" value="small_GTP"/>
    <property type="match status" value="1"/>
</dbReference>
<dbReference type="PANTHER" id="PTHR43721:SF22">
    <property type="entry name" value="ELONGATION FACTOR TU, MITOCHONDRIAL"/>
    <property type="match status" value="1"/>
</dbReference>
<dbReference type="PANTHER" id="PTHR43721">
    <property type="entry name" value="ELONGATION FACTOR TU-RELATED"/>
    <property type="match status" value="1"/>
</dbReference>
<dbReference type="Pfam" id="PF00009">
    <property type="entry name" value="GTP_EFTU"/>
    <property type="match status" value="1"/>
</dbReference>
<dbReference type="Pfam" id="PF03144">
    <property type="entry name" value="GTP_EFTU_D2"/>
    <property type="match status" value="1"/>
</dbReference>
<dbReference type="Pfam" id="PF03143">
    <property type="entry name" value="GTP_EFTU_D3"/>
    <property type="match status" value="1"/>
</dbReference>
<dbReference type="PRINTS" id="PR00315">
    <property type="entry name" value="ELONGATNFCT"/>
</dbReference>
<dbReference type="SUPFAM" id="SSF50465">
    <property type="entry name" value="EF-Tu/eEF-1alpha/eIF2-gamma C-terminal domain"/>
    <property type="match status" value="1"/>
</dbReference>
<dbReference type="SUPFAM" id="SSF52540">
    <property type="entry name" value="P-loop containing nucleoside triphosphate hydrolases"/>
    <property type="match status" value="1"/>
</dbReference>
<dbReference type="SUPFAM" id="SSF50447">
    <property type="entry name" value="Translation proteins"/>
    <property type="match status" value="1"/>
</dbReference>
<dbReference type="PROSITE" id="PS00301">
    <property type="entry name" value="G_TR_1"/>
    <property type="match status" value="1"/>
</dbReference>
<dbReference type="PROSITE" id="PS51722">
    <property type="entry name" value="G_TR_2"/>
    <property type="match status" value="1"/>
</dbReference>
<keyword id="KW-0963">Cytoplasm</keyword>
<keyword id="KW-0251">Elongation factor</keyword>
<keyword id="KW-0342">GTP-binding</keyword>
<keyword id="KW-0378">Hydrolase</keyword>
<keyword id="KW-0460">Magnesium</keyword>
<keyword id="KW-0479">Metal-binding</keyword>
<keyword id="KW-0547">Nucleotide-binding</keyword>
<keyword id="KW-0648">Protein biosynthesis</keyword>
<organism>
    <name type="scientific">Bordetella bronchiseptica (strain ATCC BAA-588 / NCTC 13252 / RB50)</name>
    <name type="common">Alcaligenes bronchisepticus</name>
    <dbReference type="NCBI Taxonomy" id="257310"/>
    <lineage>
        <taxon>Bacteria</taxon>
        <taxon>Pseudomonadati</taxon>
        <taxon>Pseudomonadota</taxon>
        <taxon>Betaproteobacteria</taxon>
        <taxon>Burkholderiales</taxon>
        <taxon>Alcaligenaceae</taxon>
        <taxon>Bordetella</taxon>
    </lineage>
</organism>
<protein>
    <recommendedName>
        <fullName evidence="2">Elongation factor Tu</fullName>
        <shortName evidence="2">EF-Tu</shortName>
        <ecNumber evidence="2">3.6.5.3</ecNumber>
    </recommendedName>
</protein>
<proteinExistence type="inferred from homology"/>
<feature type="chain" id="PRO_0000337327" description="Elongation factor Tu">
    <location>
        <begin position="1"/>
        <end position="396"/>
    </location>
</feature>
<feature type="domain" description="tr-type G">
    <location>
        <begin position="10"/>
        <end position="206"/>
    </location>
</feature>
<feature type="region of interest" description="G1" evidence="1">
    <location>
        <begin position="19"/>
        <end position="26"/>
    </location>
</feature>
<feature type="region of interest" description="G2" evidence="1">
    <location>
        <begin position="60"/>
        <end position="64"/>
    </location>
</feature>
<feature type="region of interest" description="G3" evidence="1">
    <location>
        <begin position="81"/>
        <end position="84"/>
    </location>
</feature>
<feature type="region of interest" description="G4" evidence="1">
    <location>
        <begin position="136"/>
        <end position="139"/>
    </location>
</feature>
<feature type="region of interest" description="G5" evidence="1">
    <location>
        <begin position="174"/>
        <end position="176"/>
    </location>
</feature>
<feature type="binding site" evidence="2">
    <location>
        <begin position="19"/>
        <end position="26"/>
    </location>
    <ligand>
        <name>GTP</name>
        <dbReference type="ChEBI" id="CHEBI:37565"/>
    </ligand>
</feature>
<feature type="binding site" evidence="2">
    <location>
        <position position="26"/>
    </location>
    <ligand>
        <name>Mg(2+)</name>
        <dbReference type="ChEBI" id="CHEBI:18420"/>
    </ligand>
</feature>
<feature type="binding site" evidence="2">
    <location>
        <begin position="81"/>
        <end position="85"/>
    </location>
    <ligand>
        <name>GTP</name>
        <dbReference type="ChEBI" id="CHEBI:37565"/>
    </ligand>
</feature>
<feature type="binding site" evidence="2">
    <location>
        <begin position="136"/>
        <end position="139"/>
    </location>
    <ligand>
        <name>GTP</name>
        <dbReference type="ChEBI" id="CHEBI:37565"/>
    </ligand>
</feature>
<reference key="1">
    <citation type="journal article" date="2003" name="Nat. Genet.">
        <title>Comparative analysis of the genome sequences of Bordetella pertussis, Bordetella parapertussis and Bordetella bronchiseptica.</title>
        <authorList>
            <person name="Parkhill J."/>
            <person name="Sebaihia M."/>
            <person name="Preston A."/>
            <person name="Murphy L.D."/>
            <person name="Thomson N.R."/>
            <person name="Harris D.E."/>
            <person name="Holden M.T.G."/>
            <person name="Churcher C.M."/>
            <person name="Bentley S.D."/>
            <person name="Mungall K.L."/>
            <person name="Cerdeno-Tarraga A.-M."/>
            <person name="Temple L."/>
            <person name="James K.D."/>
            <person name="Harris B."/>
            <person name="Quail M.A."/>
            <person name="Achtman M."/>
            <person name="Atkin R."/>
            <person name="Baker S."/>
            <person name="Basham D."/>
            <person name="Bason N."/>
            <person name="Cherevach I."/>
            <person name="Chillingworth T."/>
            <person name="Collins M."/>
            <person name="Cronin A."/>
            <person name="Davis P."/>
            <person name="Doggett J."/>
            <person name="Feltwell T."/>
            <person name="Goble A."/>
            <person name="Hamlin N."/>
            <person name="Hauser H."/>
            <person name="Holroyd S."/>
            <person name="Jagels K."/>
            <person name="Leather S."/>
            <person name="Moule S."/>
            <person name="Norberczak H."/>
            <person name="O'Neil S."/>
            <person name="Ormond D."/>
            <person name="Price C."/>
            <person name="Rabbinowitsch E."/>
            <person name="Rutter S."/>
            <person name="Sanders M."/>
            <person name="Saunders D."/>
            <person name="Seeger K."/>
            <person name="Sharp S."/>
            <person name="Simmonds M."/>
            <person name="Skelton J."/>
            <person name="Squares R."/>
            <person name="Squares S."/>
            <person name="Stevens K."/>
            <person name="Unwin L."/>
            <person name="Whitehead S."/>
            <person name="Barrell B.G."/>
            <person name="Maskell D.J."/>
        </authorList>
    </citation>
    <scope>NUCLEOTIDE SEQUENCE [LARGE SCALE GENOMIC DNA]</scope>
    <source>
        <strain>ATCC BAA-588 / NCTC 13252 / RB50</strain>
    </source>
</reference>
<name>EFTU_BORBR</name>
<gene>
    <name evidence="2" type="primary">tuf1</name>
    <name type="ordered locus">BB0007</name>
</gene>
<gene>
    <name evidence="2" type="primary">tuf2</name>
    <name type="ordered locus">BB0027</name>
</gene>
<sequence>MAKGKFERTKPHVNVGTIGHVDHGKTTLTAAITTVLSNKFGGEARGYDQIDAAPEEKARGITINTSHVEYETETRHYAHVDCPGHADYVKNMITGAAQMDGAILVVSAADGPMPQTREHILLSRQVGVPYIIVFLNKADMVDDAELLELVEMEVRELLSKYDFPGDDTPIVKGSAKLALEGDKGELGEQAILSLAQALDTYIPTPERAVDGAFLMPVEDVFSISGRGTVVTGRIERGVVKVGEEIEIVGIKPTVKTTCTGVEMFRKLLDQGQAGDNVGILLRGTKREDVERGQVLAKPGSINPHTDFTAEVYILSKEEGGRHTPFFNGYRPQFYFRTTDVTGTIDLPADKEMVLPGDNVSMTVKLLAPIAMEEGLRFAIREGGRTVGAGVVAKIIK</sequence>
<comment type="function">
    <text evidence="2">GTP hydrolase that promotes the GTP-dependent binding of aminoacyl-tRNA to the A-site of ribosomes during protein biosynthesis.</text>
</comment>
<comment type="catalytic activity">
    <reaction evidence="2">
        <text>GTP + H2O = GDP + phosphate + H(+)</text>
        <dbReference type="Rhea" id="RHEA:19669"/>
        <dbReference type="ChEBI" id="CHEBI:15377"/>
        <dbReference type="ChEBI" id="CHEBI:15378"/>
        <dbReference type="ChEBI" id="CHEBI:37565"/>
        <dbReference type="ChEBI" id="CHEBI:43474"/>
        <dbReference type="ChEBI" id="CHEBI:58189"/>
        <dbReference type="EC" id="3.6.5.3"/>
    </reaction>
    <physiologicalReaction direction="left-to-right" evidence="2">
        <dbReference type="Rhea" id="RHEA:19670"/>
    </physiologicalReaction>
</comment>
<comment type="subunit">
    <text evidence="2">Monomer.</text>
</comment>
<comment type="subcellular location">
    <subcellularLocation>
        <location evidence="2">Cytoplasm</location>
    </subcellularLocation>
</comment>
<comment type="similarity">
    <text evidence="2">Belongs to the TRAFAC class translation factor GTPase superfamily. Classic translation factor GTPase family. EF-Tu/EF-1A subfamily.</text>
</comment>